<sequence length="121" mass="12995">MDKKVTRLRRAVPTRRKITQLGVHRLSVFRSNQHIYANIISPEGDRVVVSASTLEAEVRTQLAGQSGAGGNAAAAALIGKRVAEKAKAAGIELVAFDRSGFRYHGRVKALADAAREAGLKF</sequence>
<feature type="chain" id="PRO_0000251290" description="Large ribosomal subunit protein uL18">
    <location>
        <begin position="1"/>
        <end position="121"/>
    </location>
</feature>
<keyword id="KW-1185">Reference proteome</keyword>
<keyword id="KW-0687">Ribonucleoprotein</keyword>
<keyword id="KW-0689">Ribosomal protein</keyword>
<keyword id="KW-0694">RNA-binding</keyword>
<keyword id="KW-0699">rRNA-binding</keyword>
<comment type="function">
    <text evidence="1">This is one of the proteins that bind and probably mediate the attachment of the 5S RNA into the large ribosomal subunit, where it forms part of the central protuberance.</text>
</comment>
<comment type="subunit">
    <text evidence="1">Part of the 50S ribosomal subunit; part of the 5S rRNA/L5/L18/L25 subcomplex. Contacts the 5S and 23S rRNAs.</text>
</comment>
<comment type="similarity">
    <text evidence="1">Belongs to the universal ribosomal protein uL18 family.</text>
</comment>
<reference key="1">
    <citation type="journal article" date="2006" name="J. Bacteriol.">
        <title>Comparison of the genome sequence of the poultry pathogen Bordetella avium with those of B. bronchiseptica, B. pertussis, and B. parapertussis reveals extensive diversity in surface structures associated with host interaction.</title>
        <authorList>
            <person name="Sebaihia M."/>
            <person name="Preston A."/>
            <person name="Maskell D.J."/>
            <person name="Kuzmiak H."/>
            <person name="Connell T.D."/>
            <person name="King N.D."/>
            <person name="Orndorff P.E."/>
            <person name="Miyamoto D.M."/>
            <person name="Thomson N.R."/>
            <person name="Harris D."/>
            <person name="Goble A."/>
            <person name="Lord A."/>
            <person name="Murphy L."/>
            <person name="Quail M.A."/>
            <person name="Rutter S."/>
            <person name="Squares R."/>
            <person name="Squares S."/>
            <person name="Woodward J."/>
            <person name="Parkhill J."/>
            <person name="Temple L.M."/>
        </authorList>
    </citation>
    <scope>NUCLEOTIDE SEQUENCE [LARGE SCALE GENOMIC DNA]</scope>
    <source>
        <strain>197N</strain>
    </source>
</reference>
<accession>Q2L268</accession>
<organism>
    <name type="scientific">Bordetella avium (strain 197N)</name>
    <dbReference type="NCBI Taxonomy" id="360910"/>
    <lineage>
        <taxon>Bacteria</taxon>
        <taxon>Pseudomonadati</taxon>
        <taxon>Pseudomonadota</taxon>
        <taxon>Betaproteobacteria</taxon>
        <taxon>Burkholderiales</taxon>
        <taxon>Alcaligenaceae</taxon>
        <taxon>Bordetella</taxon>
    </lineage>
</organism>
<evidence type="ECO:0000255" key="1">
    <source>
        <dbReference type="HAMAP-Rule" id="MF_01337"/>
    </source>
</evidence>
<evidence type="ECO:0000305" key="2"/>
<gene>
    <name evidence="1" type="primary">rplR</name>
    <name type="ordered locus">BAV0050</name>
</gene>
<proteinExistence type="inferred from homology"/>
<dbReference type="EMBL" id="AM167904">
    <property type="protein sequence ID" value="CAJ47634.1"/>
    <property type="molecule type" value="Genomic_DNA"/>
</dbReference>
<dbReference type="RefSeq" id="WP_012415756.1">
    <property type="nucleotide sequence ID" value="NC_010645.1"/>
</dbReference>
<dbReference type="SMR" id="Q2L268"/>
<dbReference type="STRING" id="360910.BAV0050"/>
<dbReference type="GeneID" id="92936705"/>
<dbReference type="KEGG" id="bav:BAV0050"/>
<dbReference type="eggNOG" id="COG0256">
    <property type="taxonomic scope" value="Bacteria"/>
</dbReference>
<dbReference type="HOGENOM" id="CLU_098841_0_1_4"/>
<dbReference type="OrthoDB" id="9810939at2"/>
<dbReference type="Proteomes" id="UP000001977">
    <property type="component" value="Chromosome"/>
</dbReference>
<dbReference type="GO" id="GO:0022625">
    <property type="term" value="C:cytosolic large ribosomal subunit"/>
    <property type="evidence" value="ECO:0007669"/>
    <property type="project" value="TreeGrafter"/>
</dbReference>
<dbReference type="GO" id="GO:0008097">
    <property type="term" value="F:5S rRNA binding"/>
    <property type="evidence" value="ECO:0007669"/>
    <property type="project" value="TreeGrafter"/>
</dbReference>
<dbReference type="GO" id="GO:0003735">
    <property type="term" value="F:structural constituent of ribosome"/>
    <property type="evidence" value="ECO:0007669"/>
    <property type="project" value="InterPro"/>
</dbReference>
<dbReference type="GO" id="GO:0006412">
    <property type="term" value="P:translation"/>
    <property type="evidence" value="ECO:0007669"/>
    <property type="project" value="UniProtKB-UniRule"/>
</dbReference>
<dbReference type="CDD" id="cd00432">
    <property type="entry name" value="Ribosomal_L18_L5e"/>
    <property type="match status" value="1"/>
</dbReference>
<dbReference type="FunFam" id="3.30.420.100:FF:000001">
    <property type="entry name" value="50S ribosomal protein L18"/>
    <property type="match status" value="1"/>
</dbReference>
<dbReference type="Gene3D" id="3.30.420.100">
    <property type="match status" value="1"/>
</dbReference>
<dbReference type="HAMAP" id="MF_01337_B">
    <property type="entry name" value="Ribosomal_uL18_B"/>
    <property type="match status" value="1"/>
</dbReference>
<dbReference type="InterPro" id="IPR004389">
    <property type="entry name" value="Ribosomal_uL18_bac-type"/>
</dbReference>
<dbReference type="InterPro" id="IPR005484">
    <property type="entry name" value="Ribosomal_uL18_bac/euk"/>
</dbReference>
<dbReference type="NCBIfam" id="TIGR00060">
    <property type="entry name" value="L18_bact"/>
    <property type="match status" value="1"/>
</dbReference>
<dbReference type="PANTHER" id="PTHR12899">
    <property type="entry name" value="39S RIBOSOMAL PROTEIN L18, MITOCHONDRIAL"/>
    <property type="match status" value="1"/>
</dbReference>
<dbReference type="PANTHER" id="PTHR12899:SF3">
    <property type="entry name" value="LARGE RIBOSOMAL SUBUNIT PROTEIN UL18M"/>
    <property type="match status" value="1"/>
</dbReference>
<dbReference type="Pfam" id="PF00861">
    <property type="entry name" value="Ribosomal_L18p"/>
    <property type="match status" value="1"/>
</dbReference>
<dbReference type="SUPFAM" id="SSF53137">
    <property type="entry name" value="Translational machinery components"/>
    <property type="match status" value="1"/>
</dbReference>
<protein>
    <recommendedName>
        <fullName evidence="1">Large ribosomal subunit protein uL18</fullName>
    </recommendedName>
    <alternativeName>
        <fullName evidence="2">50S ribosomal protein L18</fullName>
    </alternativeName>
</protein>
<name>RL18_BORA1</name>